<accession>I1S4N7</accession>
<protein>
    <recommendedName>
        <fullName evidence="1">Vacuolar protein sorting-associated protein 30</fullName>
    </recommendedName>
    <alternativeName>
        <fullName evidence="5">Autophagy-related protein 6</fullName>
    </alternativeName>
</protein>
<sequence length="487" mass="54386">MNCQKCRQPLRLDGSLEDLNPAAYDVLVASASPQTLKKSSVPNPPLAQPQDQSRKSIYDRVSRNAGPPTFKRNHGSHPRDSSMSFVLLSESQMARPTPSSDPPTTPTVLRRASSSKSNADNPDAPMGSEMDRINRLFDVLSARSDVDHPICVECTEMLVEGLQKKLEIASRERDSYAKHLKEAKANKPSEEDMKTQEEALRKAERDRAAAMEELKKLESEKTSLDEELVLLEEESRQLDKEEEKFWRERNDFATRMADFQAERDSINAKYSNDSQLLEKLQRSNVYNDTFCISHDGSFATINGLRLGRLSNKPVDWPEINAAWGHALLLLVTVADKLAYRFDGYDPQPMGSTSRIIRYEVPSPSSSRLGTRAASVPPKRHILELYSSGDMPLGLTFMHRRFDNAMVGFLELVRQLGAFVHRQTEATGTPLSLPYKIDGDKIGDVSIKLGIAQDDGWTKACKLTLTCCKFLLAHASNVTSNARNGGSQ</sequence>
<name>BECN1_GIBZE</name>
<feature type="chain" id="PRO_0000443878" description="Vacuolar protein sorting-associated protein 30">
    <location>
        <begin position="1"/>
        <end position="487"/>
    </location>
</feature>
<feature type="region of interest" description="Disordered" evidence="3">
    <location>
        <begin position="33"/>
        <end position="129"/>
    </location>
</feature>
<feature type="region of interest" description="BARA" evidence="1">
    <location>
        <begin position="283"/>
        <end position="480"/>
    </location>
</feature>
<feature type="region of interest" description="Required for membrane-association, autophagic function during starvation and normal autophagosome morphology" evidence="1">
    <location>
        <begin position="456"/>
        <end position="481"/>
    </location>
</feature>
<feature type="coiled-coil region" evidence="2">
    <location>
        <begin position="152"/>
        <end position="282"/>
    </location>
</feature>
<feature type="compositionally biased region" description="Basic and acidic residues" evidence="3">
    <location>
        <begin position="52"/>
        <end position="62"/>
    </location>
</feature>
<feature type="compositionally biased region" description="Polar residues" evidence="3">
    <location>
        <begin position="81"/>
        <end position="94"/>
    </location>
</feature>
<proteinExistence type="inferred from homology"/>
<reference key="1">
    <citation type="journal article" date="2007" name="Science">
        <title>The Fusarium graminearum genome reveals a link between localized polymorphism and pathogen specialization.</title>
        <authorList>
            <person name="Cuomo C.A."/>
            <person name="Gueldener U."/>
            <person name="Xu J.-R."/>
            <person name="Trail F."/>
            <person name="Turgeon B.G."/>
            <person name="Di Pietro A."/>
            <person name="Walton J.D."/>
            <person name="Ma L.-J."/>
            <person name="Baker S.E."/>
            <person name="Rep M."/>
            <person name="Adam G."/>
            <person name="Antoniw J."/>
            <person name="Baldwin T."/>
            <person name="Calvo S.E."/>
            <person name="Chang Y.-L."/>
            <person name="DeCaprio D."/>
            <person name="Gale L.R."/>
            <person name="Gnerre S."/>
            <person name="Goswami R.S."/>
            <person name="Hammond-Kosack K."/>
            <person name="Harris L.J."/>
            <person name="Hilburn K."/>
            <person name="Kennell J.C."/>
            <person name="Kroken S."/>
            <person name="Magnuson J.K."/>
            <person name="Mannhaupt G."/>
            <person name="Mauceli E.W."/>
            <person name="Mewes H.-W."/>
            <person name="Mitterbauer R."/>
            <person name="Muehlbauer G."/>
            <person name="Muensterkoetter M."/>
            <person name="Nelson D."/>
            <person name="O'Donnell K."/>
            <person name="Ouellet T."/>
            <person name="Qi W."/>
            <person name="Quesneville H."/>
            <person name="Roncero M.I.G."/>
            <person name="Seong K.-Y."/>
            <person name="Tetko I.V."/>
            <person name="Urban M."/>
            <person name="Waalwijk C."/>
            <person name="Ward T.J."/>
            <person name="Yao J."/>
            <person name="Birren B.W."/>
            <person name="Kistler H.C."/>
        </authorList>
    </citation>
    <scope>NUCLEOTIDE SEQUENCE [LARGE SCALE GENOMIC DNA]</scope>
    <source>
        <strain>ATCC MYA-4620 / CBS 123657 / FGSC 9075 / NRRL 31084 / PH-1</strain>
    </source>
</reference>
<reference key="2">
    <citation type="journal article" date="2010" name="Nature">
        <title>Comparative genomics reveals mobile pathogenicity chromosomes in Fusarium.</title>
        <authorList>
            <person name="Ma L.-J."/>
            <person name="van der Does H.C."/>
            <person name="Borkovich K.A."/>
            <person name="Coleman J.J."/>
            <person name="Daboussi M.-J."/>
            <person name="Di Pietro A."/>
            <person name="Dufresne M."/>
            <person name="Freitag M."/>
            <person name="Grabherr M."/>
            <person name="Henrissat B."/>
            <person name="Houterman P.M."/>
            <person name="Kang S."/>
            <person name="Shim W.-B."/>
            <person name="Woloshuk C."/>
            <person name="Xie X."/>
            <person name="Xu J.-R."/>
            <person name="Antoniw J."/>
            <person name="Baker S.E."/>
            <person name="Bluhm B.H."/>
            <person name="Breakspear A."/>
            <person name="Brown D.W."/>
            <person name="Butchko R.A.E."/>
            <person name="Chapman S."/>
            <person name="Coulson R."/>
            <person name="Coutinho P.M."/>
            <person name="Danchin E.G.J."/>
            <person name="Diener A."/>
            <person name="Gale L.R."/>
            <person name="Gardiner D.M."/>
            <person name="Goff S."/>
            <person name="Hammond-Kosack K.E."/>
            <person name="Hilburn K."/>
            <person name="Hua-Van A."/>
            <person name="Jonkers W."/>
            <person name="Kazan K."/>
            <person name="Kodira C.D."/>
            <person name="Koehrsen M."/>
            <person name="Kumar L."/>
            <person name="Lee Y.-H."/>
            <person name="Li L."/>
            <person name="Manners J.M."/>
            <person name="Miranda-Saavedra D."/>
            <person name="Mukherjee M."/>
            <person name="Park G."/>
            <person name="Park J."/>
            <person name="Park S.-Y."/>
            <person name="Proctor R.H."/>
            <person name="Regev A."/>
            <person name="Ruiz-Roldan M.C."/>
            <person name="Sain D."/>
            <person name="Sakthikumar S."/>
            <person name="Sykes S."/>
            <person name="Schwartz D.C."/>
            <person name="Turgeon B.G."/>
            <person name="Wapinski I."/>
            <person name="Yoder O."/>
            <person name="Young S."/>
            <person name="Zeng Q."/>
            <person name="Zhou S."/>
            <person name="Galagan J."/>
            <person name="Cuomo C.A."/>
            <person name="Kistler H.C."/>
            <person name="Rep M."/>
        </authorList>
    </citation>
    <scope>GENOME REANNOTATION</scope>
    <source>
        <strain>ATCC MYA-4620 / CBS 123657 / FGSC 9075 / NRRL 31084 / PH-1</strain>
    </source>
</reference>
<reference key="3">
    <citation type="journal article" date="2015" name="BMC Genomics">
        <title>The completed genome sequence of the pathogenic ascomycete fungus Fusarium graminearum.</title>
        <authorList>
            <person name="King R."/>
            <person name="Urban M."/>
            <person name="Hammond-Kosack M.C.U."/>
            <person name="Hassani-Pak K."/>
            <person name="Hammond-Kosack K.E."/>
        </authorList>
    </citation>
    <scope>NUCLEOTIDE SEQUENCE [LARGE SCALE GENOMIC DNA]</scope>
    <source>
        <strain>ATCC MYA-4620 / CBS 123657 / FGSC 9075 / NRRL 31084 / PH-1</strain>
    </source>
</reference>
<reference key="4">
    <citation type="journal article" date="2017" name="Sci. Rep.">
        <title>Genome-wide functional analysis reveals that autophagy is necessary for growth, sporulation, deoxynivalenol production and virulence in Fusarium graminearum.</title>
        <authorList>
            <person name="Lv W."/>
            <person name="Wang C."/>
            <person name="Yang N."/>
            <person name="Que Y."/>
            <person name="Talbot N.J."/>
            <person name="Wang Z."/>
        </authorList>
    </citation>
    <scope>IDENTIFICATION</scope>
    <scope>FUNCTION</scope>
    <scope>DISRUPTION PHENOTYPE</scope>
</reference>
<gene>
    <name evidence="5" type="primary">VPS30</name>
    <name evidence="5" type="synonym">ATG6</name>
    <name type="ORF">FG00679</name>
    <name type="ORF">FGRAMPH1_01T01709</name>
</gene>
<keyword id="KW-0072">Autophagy</keyword>
<keyword id="KW-0175">Coiled coil</keyword>
<keyword id="KW-0967">Endosome</keyword>
<keyword id="KW-0472">Membrane</keyword>
<keyword id="KW-0653">Protein transport</keyword>
<keyword id="KW-1185">Reference proteome</keyword>
<keyword id="KW-0813">Transport</keyword>
<keyword id="KW-0926">Vacuole</keyword>
<comment type="function">
    <text evidence="1 4">Required for cytoplasm to vacuole transport (Cvt), autophagy, nucleophagy, and mitophagy, as a part of the autophagy-specific VPS34 PI3-kinase complex I (By similarity). This complex is essential to recruit the ATG8-phosphatidylinositol conjugate and the ATG12-ATG5 conjugate to the pre-autophagosomal structure (By similarity). Also involved in endosome-to-Golgi retrograde transport as part of the VPS34 PI3-kinase complex II (By similarity). Autophagy is required for proper vegetative growth, asexual/sexual reproduction, and full virulence (PubMed:28894236). Autophagy is particularly involved in the biosynthesis of deoxynivalenol (DON), an important virulence determinant (PubMed:28894236).</text>
</comment>
<comment type="subunit">
    <text evidence="1">Component of the autophagy-specific VPS34 PI3-kinase complex I; and of the VPS34 PI3-kinase complex II (By similarity).</text>
</comment>
<comment type="subcellular location">
    <subcellularLocation>
        <location evidence="1">Endosome membrane</location>
        <topology evidence="1">Peripheral membrane protein</topology>
    </subcellularLocation>
    <subcellularLocation>
        <location evidence="1">Vacuole membrane</location>
        <topology evidence="1">Peripheral membrane protein</topology>
    </subcellularLocation>
    <subcellularLocation>
        <location evidence="1">Preautophagosomal structure membrane</location>
        <topology evidence="1">Peripheral membrane protein</topology>
    </subcellularLocation>
    <text evidence="1">With the VPS34 PI3-kinase complex I, localizes to the vacuole-isolation membrane contact site (VICS) during isolation membrane (IM) expansion (By similarity). The IM is a membrane sac generated from the pre-autophagosomal structure that ultimately expands to become a mature autophagosome (By similarity).</text>
</comment>
<comment type="domain">
    <text evidence="1">The C-terminal domain called the BARA domain is dispensable for the construction of both VPS34 PI3-kinase complexes, but is specifically required for autophagy through the targeting of complex I to the pre-autophagosomal structure (By similarity).</text>
</comment>
<comment type="disruption phenotype">
    <text evidence="4">Significantly decreases the radial growth of colonies under nutrient-rich conditions (PubMed:28894236). Causes only mild infection in point-inoculated spikelets of flowering wheat heads and impairs the spreading to nearby spikelets (PubMed:28894236).</text>
</comment>
<comment type="similarity">
    <text evidence="6">Belongs to the beclin family.</text>
</comment>
<dbReference type="EMBL" id="HG970332">
    <property type="protein sequence ID" value="CEF72655.1"/>
    <property type="molecule type" value="Genomic_DNA"/>
</dbReference>
<dbReference type="RefSeq" id="XP_011316376.1">
    <property type="nucleotide sequence ID" value="XM_011318074.1"/>
</dbReference>
<dbReference type="SMR" id="I1S4N7"/>
<dbReference type="FunCoup" id="I1S4N7">
    <property type="interactions" value="537"/>
</dbReference>
<dbReference type="STRING" id="229533.I1S4N7"/>
<dbReference type="KEGG" id="fgr:FGSG_11805"/>
<dbReference type="VEuPathDB" id="FungiDB:FGRAMPH1_01G01709"/>
<dbReference type="eggNOG" id="KOG2751">
    <property type="taxonomic scope" value="Eukaryota"/>
</dbReference>
<dbReference type="HOGENOM" id="CLU_024219_3_1_1"/>
<dbReference type="InParanoid" id="I1S4N7"/>
<dbReference type="OrthoDB" id="89924at110618"/>
<dbReference type="Proteomes" id="UP000070720">
    <property type="component" value="Chromosome 1"/>
</dbReference>
<dbReference type="GO" id="GO:0010008">
    <property type="term" value="C:endosome membrane"/>
    <property type="evidence" value="ECO:0007669"/>
    <property type="project" value="UniProtKB-SubCell"/>
</dbReference>
<dbReference type="GO" id="GO:0034045">
    <property type="term" value="C:phagophore assembly site membrane"/>
    <property type="evidence" value="ECO:0007669"/>
    <property type="project" value="UniProtKB-SubCell"/>
</dbReference>
<dbReference type="GO" id="GO:0034271">
    <property type="term" value="C:phosphatidylinositol 3-kinase complex, class III, type I"/>
    <property type="evidence" value="ECO:0007669"/>
    <property type="project" value="TreeGrafter"/>
</dbReference>
<dbReference type="GO" id="GO:0034272">
    <property type="term" value="C:phosphatidylinositol 3-kinase complex, class III, type II"/>
    <property type="evidence" value="ECO:0007669"/>
    <property type="project" value="TreeGrafter"/>
</dbReference>
<dbReference type="GO" id="GO:0005774">
    <property type="term" value="C:vacuolar membrane"/>
    <property type="evidence" value="ECO:0007669"/>
    <property type="project" value="UniProtKB-SubCell"/>
</dbReference>
<dbReference type="GO" id="GO:0043548">
    <property type="term" value="F:phosphatidylinositol 3-kinase binding"/>
    <property type="evidence" value="ECO:0007669"/>
    <property type="project" value="TreeGrafter"/>
</dbReference>
<dbReference type="GO" id="GO:0030674">
    <property type="term" value="F:protein-macromolecule adaptor activity"/>
    <property type="evidence" value="ECO:0007669"/>
    <property type="project" value="TreeGrafter"/>
</dbReference>
<dbReference type="GO" id="GO:0000045">
    <property type="term" value="P:autophagosome assembly"/>
    <property type="evidence" value="ECO:0007669"/>
    <property type="project" value="TreeGrafter"/>
</dbReference>
<dbReference type="GO" id="GO:0006995">
    <property type="term" value="P:cellular response to nitrogen starvation"/>
    <property type="evidence" value="ECO:0007669"/>
    <property type="project" value="TreeGrafter"/>
</dbReference>
<dbReference type="GO" id="GO:0045324">
    <property type="term" value="P:late endosome to vacuole transport"/>
    <property type="evidence" value="ECO:0007669"/>
    <property type="project" value="TreeGrafter"/>
</dbReference>
<dbReference type="GO" id="GO:0000423">
    <property type="term" value="P:mitophagy"/>
    <property type="evidence" value="ECO:0007669"/>
    <property type="project" value="TreeGrafter"/>
</dbReference>
<dbReference type="GO" id="GO:0015031">
    <property type="term" value="P:protein transport"/>
    <property type="evidence" value="ECO:0007669"/>
    <property type="project" value="UniProtKB-KW"/>
</dbReference>
<dbReference type="FunFam" id="1.10.418.40:FF:000005">
    <property type="entry name" value="Autophagy protein Apg6, putative"/>
    <property type="match status" value="1"/>
</dbReference>
<dbReference type="Gene3D" id="6.10.250.3110">
    <property type="match status" value="1"/>
</dbReference>
<dbReference type="Gene3D" id="1.10.418.40">
    <property type="entry name" value="Autophagy protein 6/Beclin 1"/>
    <property type="match status" value="1"/>
</dbReference>
<dbReference type="InterPro" id="IPR007243">
    <property type="entry name" value="Atg6/Beclin"/>
</dbReference>
<dbReference type="InterPro" id="IPR038274">
    <property type="entry name" value="Atg6/Beclin_C_sf"/>
</dbReference>
<dbReference type="InterPro" id="IPR041691">
    <property type="entry name" value="Atg6/beclin_CC"/>
</dbReference>
<dbReference type="InterPro" id="IPR040455">
    <property type="entry name" value="Atg6_BARA"/>
</dbReference>
<dbReference type="PANTHER" id="PTHR12768">
    <property type="entry name" value="BECLIN 1"/>
    <property type="match status" value="1"/>
</dbReference>
<dbReference type="PANTHER" id="PTHR12768:SF4">
    <property type="entry name" value="BECLIN-1"/>
    <property type="match status" value="1"/>
</dbReference>
<dbReference type="Pfam" id="PF04111">
    <property type="entry name" value="APG6"/>
    <property type="match status" value="1"/>
</dbReference>
<dbReference type="Pfam" id="PF17675">
    <property type="entry name" value="APG6_N"/>
    <property type="match status" value="1"/>
</dbReference>
<organism>
    <name type="scientific">Gibberella zeae (strain ATCC MYA-4620 / CBS 123657 / FGSC 9075 / NRRL 31084 / PH-1)</name>
    <name type="common">Wheat head blight fungus</name>
    <name type="synonym">Fusarium graminearum</name>
    <dbReference type="NCBI Taxonomy" id="229533"/>
    <lineage>
        <taxon>Eukaryota</taxon>
        <taxon>Fungi</taxon>
        <taxon>Dikarya</taxon>
        <taxon>Ascomycota</taxon>
        <taxon>Pezizomycotina</taxon>
        <taxon>Sordariomycetes</taxon>
        <taxon>Hypocreomycetidae</taxon>
        <taxon>Hypocreales</taxon>
        <taxon>Nectriaceae</taxon>
        <taxon>Fusarium</taxon>
    </lineage>
</organism>
<evidence type="ECO:0000250" key="1">
    <source>
        <dbReference type="UniProtKB" id="Q02948"/>
    </source>
</evidence>
<evidence type="ECO:0000255" key="2"/>
<evidence type="ECO:0000256" key="3">
    <source>
        <dbReference type="SAM" id="MobiDB-lite"/>
    </source>
</evidence>
<evidence type="ECO:0000269" key="4">
    <source>
    </source>
</evidence>
<evidence type="ECO:0000303" key="5">
    <source>
    </source>
</evidence>
<evidence type="ECO:0000305" key="6"/>